<gene>
    <name evidence="1" type="primary">rpiA</name>
    <name type="ordered locus">EcHS_A3072</name>
</gene>
<evidence type="ECO:0000255" key="1">
    <source>
        <dbReference type="HAMAP-Rule" id="MF_00170"/>
    </source>
</evidence>
<sequence length="219" mass="22860">MTQDELKKAVGWAALQYVQPGTIVGVGTGSTAAHFIDALGTMKGQIEGAVSSSDASTEKLKSLGIHVFDLNEVDSLGIYVDGADEINGHMQMIKGGGAALTREKIIASVAEKFICIADASKQVDILGKFPLPVEVIPMARSAVARQLVKLGGRPEYRQGVVTDNGNVILDVHGMEILDPIAMENAINAIPGVVTVGLFANRGADVALIGTPDGVKTIVK</sequence>
<proteinExistence type="inferred from homology"/>
<reference key="1">
    <citation type="journal article" date="2008" name="J. Bacteriol.">
        <title>The pangenome structure of Escherichia coli: comparative genomic analysis of E. coli commensal and pathogenic isolates.</title>
        <authorList>
            <person name="Rasko D.A."/>
            <person name="Rosovitz M.J."/>
            <person name="Myers G.S.A."/>
            <person name="Mongodin E.F."/>
            <person name="Fricke W.F."/>
            <person name="Gajer P."/>
            <person name="Crabtree J."/>
            <person name="Sebaihia M."/>
            <person name="Thomson N.R."/>
            <person name="Chaudhuri R."/>
            <person name="Henderson I.R."/>
            <person name="Sperandio V."/>
            <person name="Ravel J."/>
        </authorList>
    </citation>
    <scope>NUCLEOTIDE SEQUENCE [LARGE SCALE GENOMIC DNA]</scope>
    <source>
        <strain>HS</strain>
    </source>
</reference>
<dbReference type="EC" id="5.3.1.6" evidence="1"/>
<dbReference type="EMBL" id="CP000802">
    <property type="protein sequence ID" value="ABV07308.1"/>
    <property type="molecule type" value="Genomic_DNA"/>
</dbReference>
<dbReference type="RefSeq" id="WP_000189743.1">
    <property type="nucleotide sequence ID" value="NC_009800.1"/>
</dbReference>
<dbReference type="SMR" id="A8A454"/>
<dbReference type="GeneID" id="93779085"/>
<dbReference type="KEGG" id="ecx:EcHS_A3072"/>
<dbReference type="HOGENOM" id="CLU_056590_1_1_6"/>
<dbReference type="UniPathway" id="UPA00115">
    <property type="reaction ID" value="UER00412"/>
</dbReference>
<dbReference type="GO" id="GO:0005829">
    <property type="term" value="C:cytosol"/>
    <property type="evidence" value="ECO:0007669"/>
    <property type="project" value="TreeGrafter"/>
</dbReference>
<dbReference type="GO" id="GO:0004751">
    <property type="term" value="F:ribose-5-phosphate isomerase activity"/>
    <property type="evidence" value="ECO:0007669"/>
    <property type="project" value="UniProtKB-UniRule"/>
</dbReference>
<dbReference type="GO" id="GO:0006014">
    <property type="term" value="P:D-ribose metabolic process"/>
    <property type="evidence" value="ECO:0007669"/>
    <property type="project" value="TreeGrafter"/>
</dbReference>
<dbReference type="GO" id="GO:0009052">
    <property type="term" value="P:pentose-phosphate shunt, non-oxidative branch"/>
    <property type="evidence" value="ECO:0007669"/>
    <property type="project" value="UniProtKB-UniRule"/>
</dbReference>
<dbReference type="CDD" id="cd01398">
    <property type="entry name" value="RPI_A"/>
    <property type="match status" value="1"/>
</dbReference>
<dbReference type="FunFam" id="3.30.70.260:FF:000004">
    <property type="entry name" value="Ribose-5-phosphate isomerase A"/>
    <property type="match status" value="1"/>
</dbReference>
<dbReference type="FunFam" id="3.40.50.1360:FF:000001">
    <property type="entry name" value="Ribose-5-phosphate isomerase A"/>
    <property type="match status" value="1"/>
</dbReference>
<dbReference type="Gene3D" id="3.30.70.260">
    <property type="match status" value="1"/>
</dbReference>
<dbReference type="Gene3D" id="3.40.50.1360">
    <property type="match status" value="1"/>
</dbReference>
<dbReference type="HAMAP" id="MF_00170">
    <property type="entry name" value="Rib_5P_isom_A"/>
    <property type="match status" value="1"/>
</dbReference>
<dbReference type="InterPro" id="IPR037171">
    <property type="entry name" value="NagB/RpiA_transferase-like"/>
</dbReference>
<dbReference type="InterPro" id="IPR020672">
    <property type="entry name" value="Ribose5P_isomerase_typA_subgr"/>
</dbReference>
<dbReference type="InterPro" id="IPR004788">
    <property type="entry name" value="Ribose5P_isomerase_type_A"/>
</dbReference>
<dbReference type="NCBIfam" id="NF001924">
    <property type="entry name" value="PRK00702.1"/>
    <property type="match status" value="1"/>
</dbReference>
<dbReference type="NCBIfam" id="TIGR00021">
    <property type="entry name" value="rpiA"/>
    <property type="match status" value="1"/>
</dbReference>
<dbReference type="PANTHER" id="PTHR11934">
    <property type="entry name" value="RIBOSE-5-PHOSPHATE ISOMERASE"/>
    <property type="match status" value="1"/>
</dbReference>
<dbReference type="PANTHER" id="PTHR11934:SF0">
    <property type="entry name" value="RIBOSE-5-PHOSPHATE ISOMERASE"/>
    <property type="match status" value="1"/>
</dbReference>
<dbReference type="Pfam" id="PF06026">
    <property type="entry name" value="Rib_5-P_isom_A"/>
    <property type="match status" value="1"/>
</dbReference>
<dbReference type="SUPFAM" id="SSF75445">
    <property type="entry name" value="D-ribose-5-phosphate isomerase (RpiA), lid domain"/>
    <property type="match status" value="1"/>
</dbReference>
<dbReference type="SUPFAM" id="SSF100950">
    <property type="entry name" value="NagB/RpiA/CoA transferase-like"/>
    <property type="match status" value="1"/>
</dbReference>
<accession>A8A454</accession>
<organism>
    <name type="scientific">Escherichia coli O9:H4 (strain HS)</name>
    <dbReference type="NCBI Taxonomy" id="331112"/>
    <lineage>
        <taxon>Bacteria</taxon>
        <taxon>Pseudomonadati</taxon>
        <taxon>Pseudomonadota</taxon>
        <taxon>Gammaproteobacteria</taxon>
        <taxon>Enterobacterales</taxon>
        <taxon>Enterobacteriaceae</taxon>
        <taxon>Escherichia</taxon>
    </lineage>
</organism>
<comment type="function">
    <text evidence="1">Catalyzes the reversible conversion of ribose-5-phosphate to ribulose 5-phosphate.</text>
</comment>
<comment type="catalytic activity">
    <reaction evidence="1">
        <text>aldehydo-D-ribose 5-phosphate = D-ribulose 5-phosphate</text>
        <dbReference type="Rhea" id="RHEA:14657"/>
        <dbReference type="ChEBI" id="CHEBI:58121"/>
        <dbReference type="ChEBI" id="CHEBI:58273"/>
        <dbReference type="EC" id="5.3.1.6"/>
    </reaction>
</comment>
<comment type="pathway">
    <text evidence="1">Carbohydrate degradation; pentose phosphate pathway; D-ribose 5-phosphate from D-ribulose 5-phosphate (non-oxidative stage): step 1/1.</text>
</comment>
<comment type="subunit">
    <text evidence="1">Homodimer.</text>
</comment>
<comment type="similarity">
    <text evidence="1">Belongs to the ribose 5-phosphate isomerase family.</text>
</comment>
<name>RPIA_ECOHS</name>
<keyword id="KW-0413">Isomerase</keyword>
<feature type="chain" id="PRO_1000058299" description="Ribose-5-phosphate isomerase A">
    <location>
        <begin position="1"/>
        <end position="219"/>
    </location>
</feature>
<feature type="active site" description="Proton acceptor" evidence="1">
    <location>
        <position position="103"/>
    </location>
</feature>
<feature type="binding site" evidence="1">
    <location>
        <begin position="28"/>
        <end position="31"/>
    </location>
    <ligand>
        <name>substrate</name>
    </ligand>
</feature>
<feature type="binding site" evidence="1">
    <location>
        <begin position="81"/>
        <end position="84"/>
    </location>
    <ligand>
        <name>substrate</name>
    </ligand>
</feature>
<feature type="binding site" evidence="1">
    <location>
        <begin position="94"/>
        <end position="97"/>
    </location>
    <ligand>
        <name>substrate</name>
    </ligand>
</feature>
<feature type="binding site" evidence="1">
    <location>
        <position position="121"/>
    </location>
    <ligand>
        <name>substrate</name>
    </ligand>
</feature>
<protein>
    <recommendedName>
        <fullName evidence="1">Ribose-5-phosphate isomerase A</fullName>
        <ecNumber evidence="1">5.3.1.6</ecNumber>
    </recommendedName>
    <alternativeName>
        <fullName evidence="1">Phosphoriboisomerase A</fullName>
        <shortName evidence="1">PRI</shortName>
    </alternativeName>
</protein>